<keyword id="KW-0687">Ribonucleoprotein</keyword>
<keyword id="KW-0689">Ribosomal protein</keyword>
<evidence type="ECO:0000255" key="1">
    <source>
        <dbReference type="HAMAP-Rule" id="MF_01368"/>
    </source>
</evidence>
<evidence type="ECO:0000305" key="2"/>
<name>RL17_WOLWR</name>
<accession>C0R2Y5</accession>
<sequence>MKHGIKKRKLSRCTEHRLSTLKNLSISLINHEQIVTTLPKAKELRPYVEKFITIAKNKNTLHGRRLLLSRLHNSKLAVDKLLNVLASRYQDRKGGYSRIIKFSTRKGDCASMAVIELVDRDIAARGKVYSKNKEGGKVVTQS</sequence>
<protein>
    <recommendedName>
        <fullName evidence="1">Large ribosomal subunit protein bL17</fullName>
    </recommendedName>
    <alternativeName>
        <fullName evidence="2">50S ribosomal protein L17</fullName>
    </alternativeName>
</protein>
<organism>
    <name type="scientific">Wolbachia sp. subsp. Drosophila simulans (strain wRi)</name>
    <dbReference type="NCBI Taxonomy" id="66084"/>
    <lineage>
        <taxon>Bacteria</taxon>
        <taxon>Pseudomonadati</taxon>
        <taxon>Pseudomonadota</taxon>
        <taxon>Alphaproteobacteria</taxon>
        <taxon>Rickettsiales</taxon>
        <taxon>Anaplasmataceae</taxon>
        <taxon>Wolbachieae</taxon>
        <taxon>Wolbachia</taxon>
    </lineage>
</organism>
<feature type="chain" id="PRO_1000184056" description="Large ribosomal subunit protein bL17">
    <location>
        <begin position="1"/>
        <end position="142"/>
    </location>
</feature>
<gene>
    <name evidence="1" type="primary">rplQ</name>
    <name type="ordered locus">WRi_004950</name>
</gene>
<reference key="1">
    <citation type="journal article" date="2009" name="Proc. Natl. Acad. Sci. U.S.A.">
        <title>The mosaic genome structure of the Wolbachia wRi strain infecting Drosophila simulans.</title>
        <authorList>
            <person name="Klasson L."/>
            <person name="Westberg J."/>
            <person name="Sapountzis P."/>
            <person name="Naeslund K."/>
            <person name="Lutnaes Y."/>
            <person name="Darby A.C."/>
            <person name="Veneti Z."/>
            <person name="Chen L."/>
            <person name="Braig H.R."/>
            <person name="Garrett R."/>
            <person name="Bourtzis K."/>
            <person name="Andersson S.G."/>
        </authorList>
    </citation>
    <scope>NUCLEOTIDE SEQUENCE [LARGE SCALE GENOMIC DNA]</scope>
    <source>
        <strain>wRi</strain>
    </source>
</reference>
<dbReference type="EMBL" id="CP001391">
    <property type="protein sequence ID" value="ACN95277.1"/>
    <property type="molecule type" value="Genomic_DNA"/>
</dbReference>
<dbReference type="RefSeq" id="WP_007550873.1">
    <property type="nucleotide sequence ID" value="NZ_MKIF01000201.1"/>
</dbReference>
<dbReference type="SMR" id="C0R2Y5"/>
<dbReference type="STRING" id="66084.WRi_004950"/>
<dbReference type="GeneID" id="70036140"/>
<dbReference type="KEGG" id="wri:WRi_004950"/>
<dbReference type="HOGENOM" id="CLU_074407_2_0_5"/>
<dbReference type="Proteomes" id="UP000001293">
    <property type="component" value="Chromosome"/>
</dbReference>
<dbReference type="GO" id="GO:0022625">
    <property type="term" value="C:cytosolic large ribosomal subunit"/>
    <property type="evidence" value="ECO:0007669"/>
    <property type="project" value="TreeGrafter"/>
</dbReference>
<dbReference type="GO" id="GO:0003735">
    <property type="term" value="F:structural constituent of ribosome"/>
    <property type="evidence" value="ECO:0007669"/>
    <property type="project" value="InterPro"/>
</dbReference>
<dbReference type="GO" id="GO:0006412">
    <property type="term" value="P:translation"/>
    <property type="evidence" value="ECO:0007669"/>
    <property type="project" value="UniProtKB-UniRule"/>
</dbReference>
<dbReference type="Gene3D" id="3.90.1030.10">
    <property type="entry name" value="Ribosomal protein L17"/>
    <property type="match status" value="1"/>
</dbReference>
<dbReference type="HAMAP" id="MF_01368">
    <property type="entry name" value="Ribosomal_bL17"/>
    <property type="match status" value="1"/>
</dbReference>
<dbReference type="InterPro" id="IPR000456">
    <property type="entry name" value="Ribosomal_bL17"/>
</dbReference>
<dbReference type="InterPro" id="IPR036373">
    <property type="entry name" value="Ribosomal_bL17_sf"/>
</dbReference>
<dbReference type="NCBIfam" id="TIGR00059">
    <property type="entry name" value="L17"/>
    <property type="match status" value="1"/>
</dbReference>
<dbReference type="PANTHER" id="PTHR14413:SF16">
    <property type="entry name" value="LARGE RIBOSOMAL SUBUNIT PROTEIN BL17M"/>
    <property type="match status" value="1"/>
</dbReference>
<dbReference type="PANTHER" id="PTHR14413">
    <property type="entry name" value="RIBOSOMAL PROTEIN L17"/>
    <property type="match status" value="1"/>
</dbReference>
<dbReference type="Pfam" id="PF01196">
    <property type="entry name" value="Ribosomal_L17"/>
    <property type="match status" value="1"/>
</dbReference>
<dbReference type="SUPFAM" id="SSF64263">
    <property type="entry name" value="Prokaryotic ribosomal protein L17"/>
    <property type="match status" value="1"/>
</dbReference>
<comment type="subunit">
    <text evidence="1">Part of the 50S ribosomal subunit. Contacts protein L32.</text>
</comment>
<comment type="similarity">
    <text evidence="1">Belongs to the bacterial ribosomal protein bL17 family.</text>
</comment>
<proteinExistence type="inferred from homology"/>